<sequence>MAPQTLLPVLVLCVLLLQAQGGYRDKKRMQKTQLSPEIKVCQQQPKLYLCKHLCESHRDCQANNICCSTYCGNVCMSIL</sequence>
<gene>
    <name type="primary">WFDC10A</name>
    <name type="synonym">C20orf146</name>
    <name type="synonym">WAP10</name>
</gene>
<reference key="1">
    <citation type="journal article" date="2002" name="Biochem. J.">
        <title>A locus on human chromosome 20 contains several genes expressing protease inhibitor domains with homology to whey acidic protein.</title>
        <authorList>
            <person name="Clauss A."/>
            <person name="Lilja H."/>
            <person name="Lundwall A."/>
        </authorList>
    </citation>
    <scope>NUCLEOTIDE SEQUENCE [MRNA]</scope>
</reference>
<reference key="2">
    <citation type="journal article" date="2001" name="Nature">
        <title>The DNA sequence and comparative analysis of human chromosome 20.</title>
        <authorList>
            <person name="Deloukas P."/>
            <person name="Matthews L.H."/>
            <person name="Ashurst J.L."/>
            <person name="Burton J."/>
            <person name="Gilbert J.G.R."/>
            <person name="Jones M."/>
            <person name="Stavrides G."/>
            <person name="Almeida J.P."/>
            <person name="Babbage A.K."/>
            <person name="Bagguley C.L."/>
            <person name="Bailey J."/>
            <person name="Barlow K.F."/>
            <person name="Bates K.N."/>
            <person name="Beard L.M."/>
            <person name="Beare D.M."/>
            <person name="Beasley O.P."/>
            <person name="Bird C.P."/>
            <person name="Blakey S.E."/>
            <person name="Bridgeman A.M."/>
            <person name="Brown A.J."/>
            <person name="Buck D."/>
            <person name="Burrill W.D."/>
            <person name="Butler A.P."/>
            <person name="Carder C."/>
            <person name="Carter N.P."/>
            <person name="Chapman J.C."/>
            <person name="Clamp M."/>
            <person name="Clark G."/>
            <person name="Clark L.N."/>
            <person name="Clark S.Y."/>
            <person name="Clee C.M."/>
            <person name="Clegg S."/>
            <person name="Cobley V.E."/>
            <person name="Collier R.E."/>
            <person name="Connor R.E."/>
            <person name="Corby N.R."/>
            <person name="Coulson A."/>
            <person name="Coville G.J."/>
            <person name="Deadman R."/>
            <person name="Dhami P.D."/>
            <person name="Dunn M."/>
            <person name="Ellington A.G."/>
            <person name="Frankland J.A."/>
            <person name="Fraser A."/>
            <person name="French L."/>
            <person name="Garner P."/>
            <person name="Grafham D.V."/>
            <person name="Griffiths C."/>
            <person name="Griffiths M.N.D."/>
            <person name="Gwilliam R."/>
            <person name="Hall R.E."/>
            <person name="Hammond S."/>
            <person name="Harley J.L."/>
            <person name="Heath P.D."/>
            <person name="Ho S."/>
            <person name="Holden J.L."/>
            <person name="Howden P.J."/>
            <person name="Huckle E."/>
            <person name="Hunt A.R."/>
            <person name="Hunt S.E."/>
            <person name="Jekosch K."/>
            <person name="Johnson C.M."/>
            <person name="Johnson D."/>
            <person name="Kay M.P."/>
            <person name="Kimberley A.M."/>
            <person name="King A."/>
            <person name="Knights A."/>
            <person name="Laird G.K."/>
            <person name="Lawlor S."/>
            <person name="Lehvaeslaiho M.H."/>
            <person name="Leversha M.A."/>
            <person name="Lloyd C."/>
            <person name="Lloyd D.M."/>
            <person name="Lovell J.D."/>
            <person name="Marsh V.L."/>
            <person name="Martin S.L."/>
            <person name="McConnachie L.J."/>
            <person name="McLay K."/>
            <person name="McMurray A.A."/>
            <person name="Milne S.A."/>
            <person name="Mistry D."/>
            <person name="Moore M.J.F."/>
            <person name="Mullikin J.C."/>
            <person name="Nickerson T."/>
            <person name="Oliver K."/>
            <person name="Parker A."/>
            <person name="Patel R."/>
            <person name="Pearce T.A.V."/>
            <person name="Peck A.I."/>
            <person name="Phillimore B.J.C.T."/>
            <person name="Prathalingam S.R."/>
            <person name="Plumb R.W."/>
            <person name="Ramsay H."/>
            <person name="Rice C.M."/>
            <person name="Ross M.T."/>
            <person name="Scott C.E."/>
            <person name="Sehra H.K."/>
            <person name="Shownkeen R."/>
            <person name="Sims S."/>
            <person name="Skuce C.D."/>
            <person name="Smith M.L."/>
            <person name="Soderlund C."/>
            <person name="Steward C.A."/>
            <person name="Sulston J.E."/>
            <person name="Swann R.M."/>
            <person name="Sycamore N."/>
            <person name="Taylor R."/>
            <person name="Tee L."/>
            <person name="Thomas D.W."/>
            <person name="Thorpe A."/>
            <person name="Tracey A."/>
            <person name="Tromans A.C."/>
            <person name="Vaudin M."/>
            <person name="Wall M."/>
            <person name="Wallis J.M."/>
            <person name="Whitehead S.L."/>
            <person name="Whittaker P."/>
            <person name="Willey D.L."/>
            <person name="Williams L."/>
            <person name="Williams S.A."/>
            <person name="Wilming L."/>
            <person name="Wray P.W."/>
            <person name="Hubbard T."/>
            <person name="Durbin R.M."/>
            <person name="Bentley D.R."/>
            <person name="Beck S."/>
            <person name="Rogers J."/>
        </authorList>
    </citation>
    <scope>NUCLEOTIDE SEQUENCE [LARGE SCALE GENOMIC DNA]</scope>
</reference>
<reference key="3">
    <citation type="submission" date="2005-09" db="EMBL/GenBank/DDBJ databases">
        <authorList>
            <person name="Mural R.J."/>
            <person name="Istrail S."/>
            <person name="Sutton G.G."/>
            <person name="Florea L."/>
            <person name="Halpern A.L."/>
            <person name="Mobarry C.M."/>
            <person name="Lippert R."/>
            <person name="Walenz B."/>
            <person name="Shatkay H."/>
            <person name="Dew I."/>
            <person name="Miller J.R."/>
            <person name="Flanigan M.J."/>
            <person name="Edwards N.J."/>
            <person name="Bolanos R."/>
            <person name="Fasulo D."/>
            <person name="Halldorsson B.V."/>
            <person name="Hannenhalli S."/>
            <person name="Turner R."/>
            <person name="Yooseph S."/>
            <person name="Lu F."/>
            <person name="Nusskern D.R."/>
            <person name="Shue B.C."/>
            <person name="Zheng X.H."/>
            <person name="Zhong F."/>
            <person name="Delcher A.L."/>
            <person name="Huson D.H."/>
            <person name="Kravitz S.A."/>
            <person name="Mouchard L."/>
            <person name="Reinert K."/>
            <person name="Remington K.A."/>
            <person name="Clark A.G."/>
            <person name="Waterman M.S."/>
            <person name="Eichler E.E."/>
            <person name="Adams M.D."/>
            <person name="Hunkapiller M.W."/>
            <person name="Myers E.W."/>
            <person name="Venter J.C."/>
        </authorList>
    </citation>
    <scope>NUCLEOTIDE SEQUENCE [LARGE SCALE GENOMIC DNA]</scope>
</reference>
<reference key="4">
    <citation type="journal article" date="2004" name="Genome Res.">
        <title>The status, quality, and expansion of the NIH full-length cDNA project: the Mammalian Gene Collection (MGC).</title>
        <authorList>
            <consortium name="The MGC Project Team"/>
        </authorList>
    </citation>
    <scope>NUCLEOTIDE SEQUENCE [LARGE SCALE MRNA]</scope>
</reference>
<accession>Q9H1F0</accession>
<accession>A2RRE9</accession>
<accession>Q5TGZ7</accession>
<comment type="subcellular location">
    <subcellularLocation>
        <location evidence="3">Secreted</location>
    </subcellularLocation>
</comment>
<organism>
    <name type="scientific">Homo sapiens</name>
    <name type="common">Human</name>
    <dbReference type="NCBI Taxonomy" id="9606"/>
    <lineage>
        <taxon>Eukaryota</taxon>
        <taxon>Metazoa</taxon>
        <taxon>Chordata</taxon>
        <taxon>Craniata</taxon>
        <taxon>Vertebrata</taxon>
        <taxon>Euteleostomi</taxon>
        <taxon>Mammalia</taxon>
        <taxon>Eutheria</taxon>
        <taxon>Euarchontoglires</taxon>
        <taxon>Primates</taxon>
        <taxon>Haplorrhini</taxon>
        <taxon>Catarrhini</taxon>
        <taxon>Hominidae</taxon>
        <taxon>Homo</taxon>
    </lineage>
</organism>
<dbReference type="EMBL" id="AY038182">
    <property type="protein sequence ID" value="AAK72469.1"/>
    <property type="molecule type" value="mRNA"/>
</dbReference>
<dbReference type="EMBL" id="AL031671">
    <property type="status" value="NOT_ANNOTATED_CDS"/>
    <property type="molecule type" value="Genomic_DNA"/>
</dbReference>
<dbReference type="EMBL" id="CH471077">
    <property type="protein sequence ID" value="EAW75827.1"/>
    <property type="molecule type" value="Genomic_DNA"/>
</dbReference>
<dbReference type="EMBL" id="BC131579">
    <property type="protein sequence ID" value="AAI31580.1"/>
    <property type="molecule type" value="mRNA"/>
</dbReference>
<dbReference type="CCDS" id="CCDS13363.1"/>
<dbReference type="RefSeq" id="NP_542791.1">
    <property type="nucleotide sequence ID" value="NM_080753.3"/>
</dbReference>
<dbReference type="SMR" id="Q9H1F0"/>
<dbReference type="BioGRID" id="126725">
    <property type="interactions" value="31"/>
</dbReference>
<dbReference type="FunCoup" id="Q9H1F0">
    <property type="interactions" value="5"/>
</dbReference>
<dbReference type="IntAct" id="Q9H1F0">
    <property type="interactions" value="2"/>
</dbReference>
<dbReference type="STRING" id="9606.ENSP00000361726"/>
<dbReference type="BioMuta" id="WFDC10A"/>
<dbReference type="DMDM" id="24212617"/>
<dbReference type="PaxDb" id="9606-ENSP00000361726"/>
<dbReference type="TopDownProteomics" id="Q9H1F0"/>
<dbReference type="DNASU" id="140832"/>
<dbReference type="Ensembl" id="ENST00000372643.4">
    <property type="protein sequence ID" value="ENSP00000361726.3"/>
    <property type="gene ID" value="ENSG00000180305.5"/>
</dbReference>
<dbReference type="GeneID" id="140832"/>
<dbReference type="KEGG" id="hsa:140832"/>
<dbReference type="MANE-Select" id="ENST00000372643.4">
    <property type="protein sequence ID" value="ENSP00000361726.3"/>
    <property type="RefSeq nucleotide sequence ID" value="NM_080753.3"/>
    <property type="RefSeq protein sequence ID" value="NP_542791.1"/>
</dbReference>
<dbReference type="UCSC" id="uc002xoz.4">
    <property type="organism name" value="human"/>
</dbReference>
<dbReference type="AGR" id="HGNC:16139"/>
<dbReference type="CTD" id="140832"/>
<dbReference type="GeneCards" id="WFDC10A"/>
<dbReference type="HGNC" id="HGNC:16139">
    <property type="gene designation" value="WFDC10A"/>
</dbReference>
<dbReference type="HPA" id="ENSG00000180305">
    <property type="expression patterns" value="Tissue enriched (epididymis)"/>
</dbReference>
<dbReference type="neXtProt" id="NX_Q9H1F0"/>
<dbReference type="PharmGKB" id="PA25688"/>
<dbReference type="VEuPathDB" id="HostDB:ENSG00000180305"/>
<dbReference type="eggNOG" id="ENOG502T9GU">
    <property type="taxonomic scope" value="Eukaryota"/>
</dbReference>
<dbReference type="GeneTree" id="ENSGT00940000163481"/>
<dbReference type="HOGENOM" id="CLU_175686_0_0_1"/>
<dbReference type="InParanoid" id="Q9H1F0"/>
<dbReference type="OMA" id="HRNCQAN"/>
<dbReference type="OrthoDB" id="9835640at2759"/>
<dbReference type="PAN-GO" id="Q9H1F0">
    <property type="GO annotations" value="4 GO annotations based on evolutionary models"/>
</dbReference>
<dbReference type="PhylomeDB" id="Q9H1F0"/>
<dbReference type="TreeFam" id="TF338513"/>
<dbReference type="PathwayCommons" id="Q9H1F0"/>
<dbReference type="SignaLink" id="Q9H1F0"/>
<dbReference type="BioGRID-ORCS" id="140832">
    <property type="hits" value="10 hits in 1061 CRISPR screens"/>
</dbReference>
<dbReference type="GenomeRNAi" id="140832"/>
<dbReference type="Pharos" id="Q9H1F0">
    <property type="development level" value="Tdark"/>
</dbReference>
<dbReference type="PRO" id="PR:Q9H1F0"/>
<dbReference type="Proteomes" id="UP000005640">
    <property type="component" value="Chromosome 20"/>
</dbReference>
<dbReference type="RNAct" id="Q9H1F0">
    <property type="molecule type" value="protein"/>
</dbReference>
<dbReference type="Bgee" id="ENSG00000180305">
    <property type="expression patterns" value="Expressed in corpus epididymis and 54 other cell types or tissues"/>
</dbReference>
<dbReference type="GO" id="GO:0005615">
    <property type="term" value="C:extracellular space"/>
    <property type="evidence" value="ECO:0000318"/>
    <property type="project" value="GO_Central"/>
</dbReference>
<dbReference type="GO" id="GO:0004867">
    <property type="term" value="F:serine-type endopeptidase inhibitor activity"/>
    <property type="evidence" value="ECO:0000318"/>
    <property type="project" value="GO_Central"/>
</dbReference>
<dbReference type="GO" id="GO:0019731">
    <property type="term" value="P:antibacterial humoral response"/>
    <property type="evidence" value="ECO:0000318"/>
    <property type="project" value="GO_Central"/>
</dbReference>
<dbReference type="GO" id="GO:0045087">
    <property type="term" value="P:innate immune response"/>
    <property type="evidence" value="ECO:0000318"/>
    <property type="project" value="GO_Central"/>
</dbReference>
<dbReference type="Gene3D" id="4.10.75.10">
    <property type="entry name" value="Elafin-like"/>
    <property type="match status" value="1"/>
</dbReference>
<dbReference type="InterPro" id="IPR036645">
    <property type="entry name" value="Elafin-like_sf"/>
</dbReference>
<dbReference type="InterPro" id="IPR008197">
    <property type="entry name" value="WAP_dom"/>
</dbReference>
<dbReference type="Pfam" id="PF00095">
    <property type="entry name" value="WAP"/>
    <property type="match status" value="1"/>
</dbReference>
<dbReference type="SUPFAM" id="SSF57256">
    <property type="entry name" value="Elafin-like"/>
    <property type="match status" value="1"/>
</dbReference>
<dbReference type="PROSITE" id="PS51390">
    <property type="entry name" value="WAP"/>
    <property type="match status" value="1"/>
</dbReference>
<name>WF10A_HUMAN</name>
<proteinExistence type="inferred from homology"/>
<evidence type="ECO:0000255" key="1"/>
<evidence type="ECO:0000255" key="2">
    <source>
        <dbReference type="PROSITE-ProRule" id="PRU00722"/>
    </source>
</evidence>
<evidence type="ECO:0000305" key="3"/>
<protein>
    <recommendedName>
        <fullName>WAP four-disulfide core domain protein 10A</fullName>
    </recommendedName>
    <alternativeName>
        <fullName>Putative protease inhibitor WAP10A</fullName>
    </alternativeName>
</protein>
<keyword id="KW-1015">Disulfide bond</keyword>
<keyword id="KW-0646">Protease inhibitor</keyword>
<keyword id="KW-1185">Reference proteome</keyword>
<keyword id="KW-0964">Secreted</keyword>
<keyword id="KW-0722">Serine protease inhibitor</keyword>
<keyword id="KW-0732">Signal</keyword>
<feature type="signal peptide" evidence="1">
    <location>
        <begin position="1"/>
        <end position="21"/>
    </location>
</feature>
<feature type="chain" id="PRO_0000041387" description="WAP four-disulfide core domain protein 10A">
    <location>
        <begin position="22"/>
        <end position="79"/>
    </location>
</feature>
<feature type="domain" description="WAP" evidence="2">
    <location>
        <begin position="34"/>
        <end position="79"/>
    </location>
</feature>
<feature type="disulfide bond" evidence="2">
    <location>
        <begin position="41"/>
        <end position="67"/>
    </location>
</feature>
<feature type="disulfide bond" evidence="2">
    <location>
        <begin position="50"/>
        <end position="71"/>
    </location>
</feature>
<feature type="disulfide bond" evidence="2">
    <location>
        <begin position="54"/>
        <end position="66"/>
    </location>
</feature>
<feature type="disulfide bond" evidence="2">
    <location>
        <begin position="60"/>
        <end position="75"/>
    </location>
</feature>